<comment type="subcellular location">
    <subcellularLocation>
        <location evidence="1">Cell inner membrane</location>
        <topology evidence="1">Multi-pass membrane protein</topology>
    </subcellularLocation>
</comment>
<comment type="similarity">
    <text evidence="1">Belongs to the UPF0761 family.</text>
</comment>
<evidence type="ECO:0000255" key="1">
    <source>
        <dbReference type="HAMAP-Rule" id="MF_00672"/>
    </source>
</evidence>
<organism>
    <name type="scientific">Halorhodospira halophila (strain DSM 244 / SL1)</name>
    <name type="common">Ectothiorhodospira halophila (strain DSM 244 / SL1)</name>
    <dbReference type="NCBI Taxonomy" id="349124"/>
    <lineage>
        <taxon>Bacteria</taxon>
        <taxon>Pseudomonadati</taxon>
        <taxon>Pseudomonadota</taxon>
        <taxon>Gammaproteobacteria</taxon>
        <taxon>Chromatiales</taxon>
        <taxon>Ectothiorhodospiraceae</taxon>
        <taxon>Halorhodospira</taxon>
    </lineage>
</organism>
<gene>
    <name type="ordered locus">Hhal_0704</name>
</gene>
<sequence length="451" mass="49582">MHYQLRRRGTKMTELRGRLRAAGDRLRALPTHPGVGEARGFGEYLIQRIQQDQCAKSAGMLAYVTLLAIVPLMTIGFSVLAAFPVFEGVTDRLREAMVDYLVPAASDAIDEHLENFMGRAAELTAVGIAGLTVTALLLLNTIERVLNEIWRVERPRPTLQRFMVYWTVLTMGPLLLGVSVASTSYMGTVNLGPLEPPSDLIAQLLNLAPFVVQAIVFSLIYSLVPHRSVPVLHAVIGGVVASGLFELAKGGFAAFIARAPTYEVVYGALAALPIFLVWLYISWLVILIGAEVTQALRGYRWRTGGDLARNRWALVLAVHILGHLYQAQRRGAGVTFAELLEQEPDAGEPALAEALETLRRHHVIERSADGAWLLARDTSTFTLAELHRMLAYPLPPAAGLETGAPWDRRLAERLRRVEERWEQSFDLSLSDLLEPTAEEAGAGRSARAEVA</sequence>
<keyword id="KW-0997">Cell inner membrane</keyword>
<keyword id="KW-1003">Cell membrane</keyword>
<keyword id="KW-0472">Membrane</keyword>
<keyword id="KW-1185">Reference proteome</keyword>
<keyword id="KW-0812">Transmembrane</keyword>
<keyword id="KW-1133">Transmembrane helix</keyword>
<reference key="1">
    <citation type="submission" date="2006-12" db="EMBL/GenBank/DDBJ databases">
        <title>Complete sequence of Halorhodospira halophila SL1.</title>
        <authorList>
            <consortium name="US DOE Joint Genome Institute"/>
            <person name="Copeland A."/>
            <person name="Lucas S."/>
            <person name="Lapidus A."/>
            <person name="Barry K."/>
            <person name="Detter J.C."/>
            <person name="Glavina del Rio T."/>
            <person name="Hammon N."/>
            <person name="Israni S."/>
            <person name="Dalin E."/>
            <person name="Tice H."/>
            <person name="Pitluck S."/>
            <person name="Saunders E."/>
            <person name="Brettin T."/>
            <person name="Bruce D."/>
            <person name="Han C."/>
            <person name="Tapia R."/>
            <person name="Schmutz J."/>
            <person name="Larimer F."/>
            <person name="Land M."/>
            <person name="Hauser L."/>
            <person name="Kyrpides N."/>
            <person name="Mikhailova N."/>
            <person name="Hoff W."/>
            <person name="Richardson P."/>
        </authorList>
    </citation>
    <scope>NUCLEOTIDE SEQUENCE [LARGE SCALE GENOMIC DNA]</scope>
    <source>
        <strain>DSM 244 / SL1</strain>
    </source>
</reference>
<dbReference type="EMBL" id="CP000544">
    <property type="protein sequence ID" value="ABM61486.1"/>
    <property type="molecule type" value="Genomic_DNA"/>
</dbReference>
<dbReference type="SMR" id="A1WUX4"/>
<dbReference type="STRING" id="349124.Hhal_0704"/>
<dbReference type="KEGG" id="hha:Hhal_0704"/>
<dbReference type="eggNOG" id="COG1295">
    <property type="taxonomic scope" value="Bacteria"/>
</dbReference>
<dbReference type="HOGENOM" id="CLU_032288_1_0_6"/>
<dbReference type="OrthoDB" id="9808671at2"/>
<dbReference type="Proteomes" id="UP000000647">
    <property type="component" value="Chromosome"/>
</dbReference>
<dbReference type="GO" id="GO:0005886">
    <property type="term" value="C:plasma membrane"/>
    <property type="evidence" value="ECO:0007669"/>
    <property type="project" value="UniProtKB-SubCell"/>
</dbReference>
<dbReference type="Gene3D" id="1.10.10.10">
    <property type="entry name" value="Winged helix-like DNA-binding domain superfamily/Winged helix DNA-binding domain"/>
    <property type="match status" value="1"/>
</dbReference>
<dbReference type="HAMAP" id="MF_00672">
    <property type="entry name" value="UPF0761"/>
    <property type="match status" value="1"/>
</dbReference>
<dbReference type="InterPro" id="IPR023679">
    <property type="entry name" value="UPF0761_bac"/>
</dbReference>
<dbReference type="InterPro" id="IPR017039">
    <property type="entry name" value="Virul_fac_BrkB"/>
</dbReference>
<dbReference type="InterPro" id="IPR036388">
    <property type="entry name" value="WH-like_DNA-bd_sf"/>
</dbReference>
<dbReference type="NCBIfam" id="NF002457">
    <property type="entry name" value="PRK01637.1"/>
    <property type="match status" value="1"/>
</dbReference>
<dbReference type="NCBIfam" id="TIGR00765">
    <property type="entry name" value="yihY_not_rbn"/>
    <property type="match status" value="1"/>
</dbReference>
<dbReference type="PANTHER" id="PTHR30213">
    <property type="entry name" value="INNER MEMBRANE PROTEIN YHJD"/>
    <property type="match status" value="1"/>
</dbReference>
<dbReference type="PANTHER" id="PTHR30213:SF0">
    <property type="entry name" value="UPF0761 MEMBRANE PROTEIN YIHY"/>
    <property type="match status" value="1"/>
</dbReference>
<dbReference type="Pfam" id="PF03631">
    <property type="entry name" value="Virul_fac_BrkB"/>
    <property type="match status" value="1"/>
</dbReference>
<feature type="chain" id="PRO_0000391034" description="UPF0761 membrane protein Hhal_0704">
    <location>
        <begin position="1"/>
        <end position="451"/>
    </location>
</feature>
<feature type="transmembrane region" description="Helical" evidence="1">
    <location>
        <begin position="66"/>
        <end position="86"/>
    </location>
</feature>
<feature type="transmembrane region" description="Helical" evidence="1">
    <location>
        <begin position="122"/>
        <end position="142"/>
    </location>
</feature>
<feature type="transmembrane region" description="Helical" evidence="1">
    <location>
        <begin position="162"/>
        <end position="182"/>
    </location>
</feature>
<feature type="transmembrane region" description="Helical" evidence="1">
    <location>
        <begin position="204"/>
        <end position="224"/>
    </location>
</feature>
<feature type="transmembrane region" description="Helical" evidence="1">
    <location>
        <begin position="228"/>
        <end position="248"/>
    </location>
</feature>
<feature type="transmembrane region" description="Helical" evidence="1">
    <location>
        <begin position="268"/>
        <end position="288"/>
    </location>
</feature>
<protein>
    <recommendedName>
        <fullName evidence="1">UPF0761 membrane protein Hhal_0704</fullName>
    </recommendedName>
</protein>
<accession>A1WUX4</accession>
<proteinExistence type="inferred from homology"/>
<name>Y704_HALHL</name>